<name>ISPD_CORJK</name>
<protein>
    <recommendedName>
        <fullName evidence="1">2-C-methyl-D-erythritol 4-phosphate cytidylyltransferase</fullName>
        <ecNumber evidence="1">2.7.7.60</ecNumber>
    </recommendedName>
    <alternativeName>
        <fullName evidence="1">4-diphosphocytidyl-2C-methyl-D-erythritol synthase</fullName>
    </alternativeName>
    <alternativeName>
        <fullName evidence="1">MEP cytidylyltransferase</fullName>
        <shortName evidence="1">MCT</shortName>
    </alternativeName>
</protein>
<accession>Q4JXJ7</accession>
<evidence type="ECO:0000255" key="1">
    <source>
        <dbReference type="HAMAP-Rule" id="MF_00108"/>
    </source>
</evidence>
<organism>
    <name type="scientific">Corynebacterium jeikeium (strain K411)</name>
    <dbReference type="NCBI Taxonomy" id="306537"/>
    <lineage>
        <taxon>Bacteria</taxon>
        <taxon>Bacillati</taxon>
        <taxon>Actinomycetota</taxon>
        <taxon>Actinomycetes</taxon>
        <taxon>Mycobacteriales</taxon>
        <taxon>Corynebacteriaceae</taxon>
        <taxon>Corynebacterium</taxon>
    </lineage>
</organism>
<proteinExistence type="inferred from homology"/>
<keyword id="KW-0414">Isoprene biosynthesis</keyword>
<keyword id="KW-0548">Nucleotidyltransferase</keyword>
<keyword id="KW-1185">Reference proteome</keyword>
<keyword id="KW-0808">Transferase</keyword>
<comment type="function">
    <text evidence="1">Catalyzes the formation of 4-diphosphocytidyl-2-C-methyl-D-erythritol from CTP and 2-C-methyl-D-erythritol 4-phosphate (MEP).</text>
</comment>
<comment type="catalytic activity">
    <reaction evidence="1">
        <text>2-C-methyl-D-erythritol 4-phosphate + CTP + H(+) = 4-CDP-2-C-methyl-D-erythritol + diphosphate</text>
        <dbReference type="Rhea" id="RHEA:13429"/>
        <dbReference type="ChEBI" id="CHEBI:15378"/>
        <dbReference type="ChEBI" id="CHEBI:33019"/>
        <dbReference type="ChEBI" id="CHEBI:37563"/>
        <dbReference type="ChEBI" id="CHEBI:57823"/>
        <dbReference type="ChEBI" id="CHEBI:58262"/>
        <dbReference type="EC" id="2.7.7.60"/>
    </reaction>
</comment>
<comment type="pathway">
    <text evidence="1">Isoprenoid biosynthesis; isopentenyl diphosphate biosynthesis via DXP pathway; isopentenyl diphosphate from 1-deoxy-D-xylulose 5-phosphate: step 2/6.</text>
</comment>
<comment type="similarity">
    <text evidence="1">Belongs to the IspD/TarI cytidylyltransferase family. IspD subfamily.</text>
</comment>
<feature type="chain" id="PRO_0000237785" description="2-C-methyl-D-erythritol 4-phosphate cytidylyltransferase">
    <location>
        <begin position="1"/>
        <end position="275"/>
    </location>
</feature>
<feature type="site" description="Transition state stabilizer" evidence="1">
    <location>
        <position position="17"/>
    </location>
</feature>
<feature type="site" description="Transition state stabilizer" evidence="1">
    <location>
        <position position="24"/>
    </location>
</feature>
<feature type="site" description="Positions MEP for the nucleophilic attack" evidence="1">
    <location>
        <position position="184"/>
    </location>
</feature>
<feature type="site" description="Positions MEP for the nucleophilic attack" evidence="1">
    <location>
        <position position="256"/>
    </location>
</feature>
<gene>
    <name evidence="1" type="primary">ispD</name>
    <name type="ordered locus">jk0308</name>
</gene>
<sequence>MTANVYALVAAAGSGTRLGFDTPKAFVELNGRSLLERSLDGLAASQSIEETIVLVSENMRDHAERIVNDPINVAEWAPMTVSVELGGGERFDSVYAGLVAIQRRLSAADEAPEGRFVAVHDAARCLTPPAMIAEVVDRARRGVADGSWYGAIPVLPVVDTIKVIDAPTSGPRAGQTVVEQTPDRASLRAAATPQVFDLGKLIEANEQYLRTTEISSAHAVDRVGASPLPLVTDDASLMEMAGFPVVAVDADPLAMKITTAQDYRVAQMILNGSEG</sequence>
<reference key="1">
    <citation type="journal article" date="2005" name="J. Bacteriol.">
        <title>Complete genome sequence and analysis of the multiresistant nosocomial pathogen Corynebacterium jeikeium K411, a lipid-requiring bacterium of the human skin flora.</title>
        <authorList>
            <person name="Tauch A."/>
            <person name="Kaiser O."/>
            <person name="Hain T."/>
            <person name="Goesmann A."/>
            <person name="Weisshaar B."/>
            <person name="Albersmeier A."/>
            <person name="Bekel T."/>
            <person name="Bischoff N."/>
            <person name="Brune I."/>
            <person name="Chakraborty T."/>
            <person name="Kalinowski J."/>
            <person name="Meyer F."/>
            <person name="Rupp O."/>
            <person name="Schneiker S."/>
            <person name="Viehoever P."/>
            <person name="Puehler A."/>
        </authorList>
    </citation>
    <scope>NUCLEOTIDE SEQUENCE [LARGE SCALE GENOMIC DNA]</scope>
    <source>
        <strain>K411</strain>
    </source>
</reference>
<dbReference type="EC" id="2.7.7.60" evidence="1"/>
<dbReference type="EMBL" id="CR931997">
    <property type="protein sequence ID" value="CAI36460.1"/>
    <property type="molecule type" value="Genomic_DNA"/>
</dbReference>
<dbReference type="RefSeq" id="WP_011273020.1">
    <property type="nucleotide sequence ID" value="NC_007164.1"/>
</dbReference>
<dbReference type="SMR" id="Q4JXJ7"/>
<dbReference type="STRING" id="306537.jk0308"/>
<dbReference type="KEGG" id="cjk:jk0308"/>
<dbReference type="PATRIC" id="fig|306537.10.peg.320"/>
<dbReference type="eggNOG" id="COG1211">
    <property type="taxonomic scope" value="Bacteria"/>
</dbReference>
<dbReference type="HOGENOM" id="CLU_061281_1_1_11"/>
<dbReference type="OrthoDB" id="9802561at2"/>
<dbReference type="UniPathway" id="UPA00056">
    <property type="reaction ID" value="UER00093"/>
</dbReference>
<dbReference type="Proteomes" id="UP000000545">
    <property type="component" value="Chromosome"/>
</dbReference>
<dbReference type="GO" id="GO:0050518">
    <property type="term" value="F:2-C-methyl-D-erythritol 4-phosphate cytidylyltransferase activity"/>
    <property type="evidence" value="ECO:0007669"/>
    <property type="project" value="UniProtKB-UniRule"/>
</dbReference>
<dbReference type="GO" id="GO:0019288">
    <property type="term" value="P:isopentenyl diphosphate biosynthetic process, methylerythritol 4-phosphate pathway"/>
    <property type="evidence" value="ECO:0007669"/>
    <property type="project" value="UniProtKB-UniRule"/>
</dbReference>
<dbReference type="CDD" id="cd02516">
    <property type="entry name" value="CDP-ME_synthetase"/>
    <property type="match status" value="1"/>
</dbReference>
<dbReference type="Gene3D" id="3.90.550.10">
    <property type="entry name" value="Spore Coat Polysaccharide Biosynthesis Protein SpsA, Chain A"/>
    <property type="match status" value="1"/>
</dbReference>
<dbReference type="HAMAP" id="MF_00108">
    <property type="entry name" value="IspD"/>
    <property type="match status" value="1"/>
</dbReference>
<dbReference type="InterPro" id="IPR001228">
    <property type="entry name" value="IspD"/>
</dbReference>
<dbReference type="InterPro" id="IPR034683">
    <property type="entry name" value="IspD/TarI"/>
</dbReference>
<dbReference type="InterPro" id="IPR050088">
    <property type="entry name" value="IspD/TarI_cytidylyltransf_bact"/>
</dbReference>
<dbReference type="InterPro" id="IPR029044">
    <property type="entry name" value="Nucleotide-diphossugar_trans"/>
</dbReference>
<dbReference type="PANTHER" id="PTHR32125">
    <property type="entry name" value="2-C-METHYL-D-ERYTHRITOL 4-PHOSPHATE CYTIDYLYLTRANSFERASE, CHLOROPLASTIC"/>
    <property type="match status" value="1"/>
</dbReference>
<dbReference type="PANTHER" id="PTHR32125:SF4">
    <property type="entry name" value="2-C-METHYL-D-ERYTHRITOL 4-PHOSPHATE CYTIDYLYLTRANSFERASE, CHLOROPLASTIC"/>
    <property type="match status" value="1"/>
</dbReference>
<dbReference type="Pfam" id="PF01128">
    <property type="entry name" value="IspD"/>
    <property type="match status" value="1"/>
</dbReference>
<dbReference type="SUPFAM" id="SSF53448">
    <property type="entry name" value="Nucleotide-diphospho-sugar transferases"/>
    <property type="match status" value="1"/>
</dbReference>